<keyword id="KW-0025">Alternative splicing</keyword>
<keyword id="KW-1048">Host nucleus</keyword>
<keyword id="KW-0945">Host-virus interaction</keyword>
<keyword id="KW-0813">Transport</keyword>
<keyword id="KW-0946">Virion</keyword>
<dbReference type="EMBL" id="AY576368">
    <property type="status" value="NOT_ANNOTATED_CDS"/>
    <property type="molecule type" value="Genomic_DNA"/>
</dbReference>
<dbReference type="SMR" id="P0C5U3"/>
<dbReference type="GO" id="GO:0042025">
    <property type="term" value="C:host cell nucleus"/>
    <property type="evidence" value="ECO:0007669"/>
    <property type="project" value="UniProtKB-SubCell"/>
</dbReference>
<dbReference type="GO" id="GO:0044423">
    <property type="term" value="C:virion component"/>
    <property type="evidence" value="ECO:0007669"/>
    <property type="project" value="UniProtKB-UniRule"/>
</dbReference>
<dbReference type="GO" id="GO:0039675">
    <property type="term" value="P:exit of virus from host cell nucleus through nuclear pore"/>
    <property type="evidence" value="ECO:0007669"/>
    <property type="project" value="UniProtKB-UniRule"/>
</dbReference>
<dbReference type="Gene3D" id="1.10.287.230">
    <property type="match status" value="1"/>
</dbReference>
<dbReference type="Gene3D" id="1.10.287.10">
    <property type="entry name" value="S15/NS1, RNA-binding"/>
    <property type="match status" value="1"/>
</dbReference>
<dbReference type="HAMAP" id="MF_04067">
    <property type="entry name" value="INFV_NEP"/>
    <property type="match status" value="1"/>
</dbReference>
<dbReference type="InterPro" id="IPR000968">
    <property type="entry name" value="Flu_NS2"/>
</dbReference>
<dbReference type="Pfam" id="PF00601">
    <property type="entry name" value="Flu_NS2"/>
    <property type="match status" value="1"/>
</dbReference>
<dbReference type="SUPFAM" id="SSF101156">
    <property type="entry name" value="Nonstructural protein ns2, Nep, M1-binding domain"/>
    <property type="match status" value="1"/>
</dbReference>
<gene>
    <name evidence="1" type="primary">NS</name>
</gene>
<reference key="1">
    <citation type="journal article" date="2004" name="Proc. Natl. Acad. Sci. U.S.A.">
        <title>H5N1 influenza: a protean pandemic threat.</title>
        <authorList>
            <person name="Guan Y."/>
            <person name="Poon L.L.M."/>
            <person name="Cheung C.Y."/>
            <person name="Ellis T.M."/>
            <person name="Lim W."/>
            <person name="Lipatov A.S."/>
            <person name="Chan K.H."/>
            <person name="Sturm-Ramirez K.M."/>
            <person name="Cheung C.L."/>
            <person name="Leung Y.H.C."/>
            <person name="Yuen K.Y."/>
            <person name="Webster R.G."/>
            <person name="Peiris J.S.M."/>
        </authorList>
    </citation>
    <scope>NUCLEOTIDE SEQUENCE [GENOMIC RNA]</scope>
</reference>
<proteinExistence type="inferred from homology"/>
<sequence length="121" mass="14359">MDSNTVSSFQDILVRMSKMQLASSSEDLNGMITQFESLKLYRDSLGEAVMRMGDFHSLQIRNGKWREQLSQKFEEIRWLIEEVRHRLKITENSFEHITFMQALQLLLEVEQEIRAFSFQLI</sequence>
<organism>
    <name type="scientific">Influenza A virus (strain A/Hong Kong/212/2003 H5N1 genotype Z+)</name>
    <dbReference type="NCBI Taxonomy" id="279794"/>
    <lineage>
        <taxon>Viruses</taxon>
        <taxon>Riboviria</taxon>
        <taxon>Orthornavirae</taxon>
        <taxon>Negarnaviricota</taxon>
        <taxon>Polyploviricotina</taxon>
        <taxon>Insthoviricetes</taxon>
        <taxon>Articulavirales</taxon>
        <taxon>Orthomyxoviridae</taxon>
        <taxon>Alphainfluenzavirus</taxon>
        <taxon>Alphainfluenzavirus influenzae</taxon>
        <taxon>Influenza A virus</taxon>
    </lineage>
</organism>
<organismHost>
    <name type="scientific">Aves</name>
    <dbReference type="NCBI Taxonomy" id="8782"/>
</organismHost>
<organismHost>
    <name type="scientific">Felis catus</name>
    <name type="common">Cat</name>
    <name type="synonym">Felis silvestris catus</name>
    <dbReference type="NCBI Taxonomy" id="9685"/>
</organismHost>
<organismHost>
    <name type="scientific">Homo sapiens</name>
    <name type="common">Human</name>
    <dbReference type="NCBI Taxonomy" id="9606"/>
</organismHost>
<organismHost>
    <name type="scientific">Panthera pardus</name>
    <name type="common">Leopard</name>
    <name type="synonym">Felis pardus</name>
    <dbReference type="NCBI Taxonomy" id="9691"/>
</organismHost>
<organismHost>
    <name type="scientific">Panthera tigris</name>
    <name type="common">Tiger</name>
    <dbReference type="NCBI Taxonomy" id="9694"/>
</organismHost>
<organismHost>
    <name type="scientific">Sus scrofa</name>
    <name type="common">Pig</name>
    <dbReference type="NCBI Taxonomy" id="9823"/>
</organismHost>
<accession>P0C5U3</accession>
<protein>
    <recommendedName>
        <fullName evidence="1">Nuclear export protein</fullName>
        <shortName evidence="1">NEP</shortName>
    </recommendedName>
    <alternativeName>
        <fullName evidence="1">Non-structural protein 2</fullName>
        <shortName evidence="1">NS2</shortName>
    </alternativeName>
</protein>
<comment type="function">
    <text evidence="1">Mediates the nuclear export of encapsidated genomic RNAs (ribonucleoproteins, RNPs). Acts as an adapter between viral RNPs complexes and the nuclear export machinery of the cell. Possesses no intrinsic RNA-binding activity, but includes a C-terminal M1-binding domain. This domain is believed to allow recognition of RNPs bound to the protein M1. Since protein M1 is not available in large quantities before late stages of infection, such an indirect recognition mechanism probably ensures that genomic RNPs are not exported from the host nucleus until sufficient quantities of viral mRNA and progeny genomic RNA have been synthesized. Furthermore, the RNPs enter the host cytoplasm only when associated with the M1 protein that is necessary to guide them to the plasma membrane. May down-regulate viral RNA synthesis when overproduced.</text>
</comment>
<comment type="subunit">
    <text evidence="1">Interacts with protein M1. May interact with host nucleoporin RAB/HRB and exportin XPO1/CRM1.</text>
</comment>
<comment type="subcellular location">
    <subcellularLocation>
        <location evidence="1">Virion</location>
    </subcellularLocation>
    <subcellularLocation>
        <location evidence="1">Host nucleus</location>
    </subcellularLocation>
</comment>
<comment type="alternative products">
    <event type="alternative splicing"/>
    <isoform>
        <id>P0C5U3-1</id>
        <name>NEP</name>
        <name>NS2</name>
        <sequence type="displayed"/>
    </isoform>
    <isoform>
        <id>Q6J880-1</id>
        <name>NS1</name>
        <sequence type="external"/>
    </isoform>
</comment>
<comment type="miscellaneous">
    <text>Average number present in a viral particle is estimated to be 130-200 molecules.</text>
</comment>
<comment type="similarity">
    <text evidence="1">Belongs to the influenza viruses NEP family.</text>
</comment>
<feature type="chain" id="PRO_0000311739" description="Nuclear export protein">
    <location>
        <begin position="1"/>
        <end position="121"/>
    </location>
</feature>
<feature type="short sequence motif" description="Nuclear export signal" evidence="1">
    <location>
        <begin position="12"/>
        <end position="21"/>
    </location>
</feature>
<feature type="short sequence motif" description="Nuclear export signal" evidence="1">
    <location>
        <begin position="85"/>
        <end position="94"/>
    </location>
</feature>
<name>NEP_I03A0</name>
<evidence type="ECO:0000255" key="1">
    <source>
        <dbReference type="HAMAP-Rule" id="MF_04067"/>
    </source>
</evidence>